<accession>P0DJM8</accession>
<reference key="1">
    <citation type="journal article" date="2004" name="Biochem. J.">
        <title>Molecular evolution and structure-function relationships of crotoxin-like and asparagine-6-containing phospholipases A2 in pit viper venoms.</title>
        <authorList>
            <person name="Chen Y.-H."/>
            <person name="Wang Y.-M."/>
            <person name="Hseu M.-J."/>
            <person name="Tsai I.-H."/>
        </authorList>
    </citation>
    <scope>PROTEIN SEQUENCE</scope>
    <scope>FUNCTION</scope>
    <scope>BIOPHYSICOCHEMICAL PROPERTIES</scope>
    <scope>MASS SPECTROMETRY</scope>
    <source>
        <tissue>Venom</tissue>
    </source>
</reference>
<sequence>NLLQFNKMIKVETGKNAIPFYAF</sequence>
<name>PA2BI_GLOIT</name>
<keyword id="KW-0106">Calcium</keyword>
<keyword id="KW-0903">Direct protein sequencing</keyword>
<keyword id="KW-1015">Disulfide bond</keyword>
<keyword id="KW-0378">Hydrolase</keyword>
<keyword id="KW-0442">Lipid degradation</keyword>
<keyword id="KW-0443">Lipid metabolism</keyword>
<keyword id="KW-0479">Metal-binding</keyword>
<keyword id="KW-0959">Myotoxin</keyword>
<keyword id="KW-0528">Neurotoxin</keyword>
<keyword id="KW-0638">Presynaptic neurotoxin</keyword>
<keyword id="KW-0964">Secreted</keyword>
<keyword id="KW-0800">Toxin</keyword>
<comment type="function">
    <text evidence="2">Snake venom phospholipase A2 (PLA2) that shows presynaptic neurotoxicity and low myotoxicity. PLA2 catalyzes the calcium-dependent hydrolysis of the 2-acyl groups in 3-sn-phosphoglycerides.</text>
</comment>
<comment type="catalytic activity">
    <reaction>
        <text>a 1,2-diacyl-sn-glycero-3-phosphocholine + H2O = a 1-acyl-sn-glycero-3-phosphocholine + a fatty acid + H(+)</text>
        <dbReference type="Rhea" id="RHEA:15801"/>
        <dbReference type="ChEBI" id="CHEBI:15377"/>
        <dbReference type="ChEBI" id="CHEBI:15378"/>
        <dbReference type="ChEBI" id="CHEBI:28868"/>
        <dbReference type="ChEBI" id="CHEBI:57643"/>
        <dbReference type="ChEBI" id="CHEBI:58168"/>
        <dbReference type="EC" id="3.1.1.4"/>
    </reaction>
</comment>
<comment type="cofactor">
    <cofactor evidence="1">
        <name>Ca(2+)</name>
        <dbReference type="ChEBI" id="CHEBI:29108"/>
    </cofactor>
    <text evidence="1">Binds 1 Ca(2+) ion.</text>
</comment>
<comment type="biophysicochemical properties">
    <kinetics>
        <Vmax evidence="2">392.0 umol/min/mg enzyme with DPPC + deoxycholate as substrate (at pH 7.4 and 37 degrees Celsius)</Vmax>
        <Vmax evidence="2">222.0 umol/min/mg enzyme with DPPC + Triton X-100 as substrate (at pH 7.4 and 37 degrees Celsius)</Vmax>
        <text>When tested as a monomer.</text>
    </kinetics>
</comment>
<comment type="subcellular location">
    <subcellularLocation>
        <location>Secreted</location>
    </subcellularLocation>
</comment>
<comment type="tissue specificity">
    <text>Expressed by the venom gland.</text>
</comment>
<comment type="PTM">
    <text evidence="1">Contains 7 disulfide bonds.</text>
</comment>
<comment type="mass spectrometry"/>
<comment type="miscellaneous">
    <text evidence="4">Negative results: does not show myotoxic activities.</text>
</comment>
<comment type="similarity">
    <text evidence="3">Belongs to the phospholipase A2 family. Group II subfamily.</text>
</comment>
<feature type="chain" id="PRO_0000418563" description="Basic phospholipase A2 intermexin">
    <location>
        <begin position="1"/>
        <end position="23" status="greater than"/>
    </location>
</feature>
<feature type="non-terminal residue">
    <location>
        <position position="23"/>
    </location>
</feature>
<proteinExistence type="evidence at protein level"/>
<organism>
    <name type="scientific">Gloydius intermedius</name>
    <name type="common">Central Asian pit viper</name>
    <name type="synonym">Agkistrodon intermedius</name>
    <dbReference type="NCBI Taxonomy" id="44732"/>
    <lineage>
        <taxon>Eukaryota</taxon>
        <taxon>Metazoa</taxon>
        <taxon>Chordata</taxon>
        <taxon>Craniata</taxon>
        <taxon>Vertebrata</taxon>
        <taxon>Euteleostomi</taxon>
        <taxon>Lepidosauria</taxon>
        <taxon>Squamata</taxon>
        <taxon>Bifurcata</taxon>
        <taxon>Unidentata</taxon>
        <taxon>Episquamata</taxon>
        <taxon>Toxicofera</taxon>
        <taxon>Serpentes</taxon>
        <taxon>Colubroidea</taxon>
        <taxon>Viperidae</taxon>
        <taxon>Crotalinae</taxon>
        <taxon>Gloydius</taxon>
    </lineage>
</organism>
<dbReference type="EC" id="3.1.1.4"/>
<dbReference type="GO" id="GO:0005576">
    <property type="term" value="C:extracellular region"/>
    <property type="evidence" value="ECO:0007669"/>
    <property type="project" value="UniProtKB-SubCell"/>
</dbReference>
<dbReference type="GO" id="GO:0046872">
    <property type="term" value="F:metal ion binding"/>
    <property type="evidence" value="ECO:0007669"/>
    <property type="project" value="UniProtKB-KW"/>
</dbReference>
<dbReference type="GO" id="GO:0004623">
    <property type="term" value="F:phospholipase A2 activity"/>
    <property type="evidence" value="ECO:0007669"/>
    <property type="project" value="UniProtKB-EC"/>
</dbReference>
<dbReference type="GO" id="GO:0090729">
    <property type="term" value="F:toxin activity"/>
    <property type="evidence" value="ECO:0007669"/>
    <property type="project" value="UniProtKB-KW"/>
</dbReference>
<dbReference type="GO" id="GO:0016042">
    <property type="term" value="P:lipid catabolic process"/>
    <property type="evidence" value="ECO:0007669"/>
    <property type="project" value="UniProtKB-KW"/>
</dbReference>
<protein>
    <recommendedName>
        <fullName>Basic phospholipase A2 intermexin</fullName>
        <shortName>svPLA2</shortName>
        <ecNumber>3.1.1.4</ecNumber>
    </recommendedName>
    <alternativeName>
        <fullName>Phosphatidylcholine 2-acylhydrolase</fullName>
    </alternativeName>
</protein>
<evidence type="ECO:0000250" key="1"/>
<evidence type="ECO:0000269" key="2">
    <source>
    </source>
</evidence>
<evidence type="ECO:0000305" key="3"/>
<evidence type="ECO:0000305" key="4">
    <source>
    </source>
</evidence>